<feature type="signal peptide" evidence="1">
    <location>
        <begin position="1"/>
        <end position="26"/>
    </location>
</feature>
<feature type="chain" id="PRO_0000041883" description="Signaling pathway modulator ZraP">
    <location>
        <begin position="27"/>
        <end position="151"/>
    </location>
</feature>
<protein>
    <recommendedName>
        <fullName evidence="2">Signaling pathway modulator ZraP</fullName>
    </recommendedName>
    <alternativeName>
        <fullName>Zinc resistance-associated protein</fullName>
    </alternativeName>
</protein>
<reference key="1">
    <citation type="journal article" date="2005" name="Nucleic Acids Res.">
        <title>The genome sequence of Salmonella enterica serovar Choleraesuis, a highly invasive and resistant zoonotic pathogen.</title>
        <authorList>
            <person name="Chiu C.-H."/>
            <person name="Tang P."/>
            <person name="Chu C."/>
            <person name="Hu S."/>
            <person name="Bao Q."/>
            <person name="Yu J."/>
            <person name="Chou Y.-Y."/>
            <person name="Wang H.-S."/>
            <person name="Lee Y.-S."/>
        </authorList>
    </citation>
    <scope>NUCLEOTIDE SEQUENCE [LARGE SCALE GENOMIC DNA]</scope>
    <source>
        <strain>SC-B67</strain>
    </source>
</reference>
<comment type="function">
    <text evidence="2">Part of the Zra signaling pathway, an envelope stress response (ESR) system composed of the periplasmic accessory protein ZraP, the histidine kinase ZraS and the transcriptional regulator ZraR. The ZraPSR system contributes to antibiotic resistance and is important for membrane integrity in the presence of membrane-targeting biocides. ZraP acts as a modulator which has both a regulatory and a chaperone function. The zinc-bound form of ZraP modulates the response of the ZraPSR system by inhibiting the expression of the zra genes, probably by interacting with ZraS.</text>
</comment>
<comment type="subcellular location">
    <subcellularLocation>
        <location evidence="2">Periplasm</location>
    </subcellularLocation>
</comment>
<comment type="similarity">
    <text evidence="3">Belongs to the ZraP family.</text>
</comment>
<evidence type="ECO:0000250" key="1"/>
<evidence type="ECO:0000250" key="2">
    <source>
        <dbReference type="UniProtKB" id="P0AAA9"/>
    </source>
</evidence>
<evidence type="ECO:0000305" key="3"/>
<dbReference type="EMBL" id="AE017220">
    <property type="protein sequence ID" value="AAX67959.1"/>
    <property type="molecule type" value="Genomic_DNA"/>
</dbReference>
<dbReference type="RefSeq" id="WP_000828129.1">
    <property type="nucleotide sequence ID" value="NC_006905.1"/>
</dbReference>
<dbReference type="SMR" id="Q57H53"/>
<dbReference type="KEGG" id="sec:SCH_4053"/>
<dbReference type="HOGENOM" id="CLU_124884_0_0_6"/>
<dbReference type="Proteomes" id="UP000000538">
    <property type="component" value="Chromosome"/>
</dbReference>
<dbReference type="GO" id="GO:0042597">
    <property type="term" value="C:periplasmic space"/>
    <property type="evidence" value="ECO:0007669"/>
    <property type="project" value="UniProtKB-SubCell"/>
</dbReference>
<dbReference type="Gene3D" id="1.20.120.1490">
    <property type="match status" value="1"/>
</dbReference>
<dbReference type="InterPro" id="IPR025961">
    <property type="entry name" value="Metal_resist"/>
</dbReference>
<dbReference type="NCBIfam" id="NF008584">
    <property type="entry name" value="PRK11546.1"/>
    <property type="match status" value="1"/>
</dbReference>
<dbReference type="Pfam" id="PF13801">
    <property type="entry name" value="Metal_resist"/>
    <property type="match status" value="1"/>
</dbReference>
<accession>Q57H53</accession>
<organism>
    <name type="scientific">Salmonella choleraesuis (strain SC-B67)</name>
    <dbReference type="NCBI Taxonomy" id="321314"/>
    <lineage>
        <taxon>Bacteria</taxon>
        <taxon>Pseudomonadati</taxon>
        <taxon>Pseudomonadota</taxon>
        <taxon>Gammaproteobacteria</taxon>
        <taxon>Enterobacterales</taxon>
        <taxon>Enterobacteriaceae</taxon>
        <taxon>Salmonella</taxon>
    </lineage>
</organism>
<proteinExistence type="inferred from homology"/>
<keyword id="KW-0574">Periplasm</keyword>
<keyword id="KW-0732">Signal</keyword>
<keyword id="KW-0346">Stress response</keyword>
<keyword id="KW-0862">Zinc</keyword>
<gene>
    <name type="primary">zraP</name>
    <name type="ordered locus">SCH_4053</name>
</gene>
<name>ZRAP_SALCH</name>
<sequence length="151" mass="16129">MKRNNKSAIALIALSLLALSSGAAFAGHHWGNNDGMWQQGGSPLTTEQQATAQKIYDDYYTQTSALRQQLISKRYEYNALLTASSPDTAKINAVAKEMESLGQKLDEQRVKRDVAMAQAGIPRGAGMGYGGCGGYGGGYHRGGGHMGMGNW</sequence>